<name>YIDC_MYCCT</name>
<gene>
    <name type="primary">yidC</name>
    <name type="ordered locus">MCAP_0868</name>
</gene>
<reference key="1">
    <citation type="journal article" date="1993" name="Nucleic Acids Res.">
        <title>Mapping of replication initiation site in Mycoplasma capricolum genome by two-dimensional gel-electrophoretic analysis.</title>
        <authorList>
            <person name="Miyata M."/>
            <person name="Sano K."/>
            <person name="Okada R."/>
            <person name="Fukumura T."/>
        </authorList>
    </citation>
    <scope>NUCLEOTIDE SEQUENCE [GENOMIC DNA]</scope>
</reference>
<reference key="2">
    <citation type="submission" date="2005-09" db="EMBL/GenBank/DDBJ databases">
        <authorList>
            <person name="Glass J.I."/>
            <person name="Lartigue C."/>
            <person name="Pfannkoch C."/>
            <person name="Baden-Tillson H."/>
            <person name="Smith H.O."/>
            <person name="Venter J.C."/>
            <person name="Roske K."/>
            <person name="Wise K.S."/>
            <person name="Calcutt M.J."/>
            <person name="Nelson W.C."/>
            <person name="Nierman W.C."/>
        </authorList>
    </citation>
    <scope>NUCLEOTIDE SEQUENCE [LARGE SCALE GENOMIC DNA]</scope>
    <source>
        <strain>California kid / ATCC 27343 / NCTC 10154</strain>
    </source>
</reference>
<comment type="function">
    <text evidence="1">Required for the insertion and/or proper folding and/or complex formation of integral membrane proteins into the membrane. Involved in integration of membrane proteins that insert both dependently and independently of the Sec translocase complex, as well as at least some lipoproteins. Aids folding of multispanning membrane proteins (By similarity).</text>
</comment>
<comment type="subunit">
    <text evidence="1">Interacts with the Sec translocase complex via SecD. Specifically interacts with transmembrane segments of nascent integral membrane proteins during membrane integration (By similarity).</text>
</comment>
<comment type="subcellular location">
    <subcellularLocation>
        <location evidence="1">Cell membrane</location>
        <topology evidence="1">Multi-pass membrane protein</topology>
    </subcellularLocation>
</comment>
<comment type="similarity">
    <text evidence="3">Belongs to the OXA1/ALB3/YidC family. Type 1 subfamily.</text>
</comment>
<protein>
    <recommendedName>
        <fullName>Membrane protein insertase YidC</fullName>
    </recommendedName>
    <alternativeName>
        <fullName>Foldase YidC</fullName>
    </alternativeName>
    <alternativeName>
        <fullName>Membrane integrase YidC</fullName>
    </alternativeName>
    <alternativeName>
        <fullName>Membrane protein YidC</fullName>
    </alternativeName>
</protein>
<keyword id="KW-1003">Cell membrane</keyword>
<keyword id="KW-0143">Chaperone</keyword>
<keyword id="KW-0472">Membrane</keyword>
<keyword id="KW-0653">Protein transport</keyword>
<keyword id="KW-0812">Transmembrane</keyword>
<keyword id="KW-1133">Transmembrane helix</keyword>
<keyword id="KW-0813">Transport</keyword>
<evidence type="ECO:0000250" key="1"/>
<evidence type="ECO:0000255" key="2"/>
<evidence type="ECO:0000305" key="3"/>
<proteinExistence type="inferred from homology"/>
<accession>P43042</accession>
<accession>Q2SR03</accession>
<feature type="chain" id="PRO_0000124722" description="Membrane protein insertase YidC">
    <location>
        <begin position="1"/>
        <end position="388"/>
    </location>
</feature>
<feature type="transmembrane region" description="Helical" evidence="2">
    <location>
        <begin position="22"/>
        <end position="42"/>
    </location>
</feature>
<feature type="transmembrane region" description="Helical" evidence="2">
    <location>
        <begin position="116"/>
        <end position="136"/>
    </location>
</feature>
<feature type="transmembrane region" description="Helical" evidence="2">
    <location>
        <begin position="156"/>
        <end position="176"/>
    </location>
</feature>
<feature type="transmembrane region" description="Helical" evidence="2">
    <location>
        <begin position="227"/>
        <end position="247"/>
    </location>
</feature>
<feature type="transmembrane region" description="Helical" evidence="2">
    <location>
        <begin position="279"/>
        <end position="299"/>
    </location>
</feature>
<feature type="transmembrane region" description="Helical" evidence="2">
    <location>
        <begin position="328"/>
        <end position="348"/>
    </location>
</feature>
<organism>
    <name type="scientific">Mycoplasma capricolum subsp. capricolum (strain California kid / ATCC 27343 / NCTC 10154)</name>
    <dbReference type="NCBI Taxonomy" id="340047"/>
    <lineage>
        <taxon>Bacteria</taxon>
        <taxon>Bacillati</taxon>
        <taxon>Mycoplasmatota</taxon>
        <taxon>Mollicutes</taxon>
        <taxon>Mycoplasmataceae</taxon>
        <taxon>Mycoplasma</taxon>
    </lineage>
</organism>
<dbReference type="EMBL" id="D14982">
    <property type="protein sequence ID" value="BAA03620.1"/>
    <property type="molecule type" value="Genomic_DNA"/>
</dbReference>
<dbReference type="EMBL" id="CP000123">
    <property type="protein sequence ID" value="ABC01268.1"/>
    <property type="molecule type" value="Genomic_DNA"/>
</dbReference>
<dbReference type="PIR" id="S42122">
    <property type="entry name" value="S42122"/>
</dbReference>
<dbReference type="TCDB" id="3.A.5.3.1">
    <property type="family name" value="the general secretory pathway (sec) family"/>
</dbReference>
<dbReference type="KEGG" id="mcp:MCAP_0868"/>
<dbReference type="HOGENOM" id="CLU_058030_0_0_14"/>
<dbReference type="PhylomeDB" id="P43042"/>
<dbReference type="Proteomes" id="UP000001928">
    <property type="component" value="Chromosome"/>
</dbReference>
<dbReference type="GO" id="GO:0005886">
    <property type="term" value="C:plasma membrane"/>
    <property type="evidence" value="ECO:0007669"/>
    <property type="project" value="UniProtKB-SubCell"/>
</dbReference>
<dbReference type="GO" id="GO:0032977">
    <property type="term" value="F:membrane insertase activity"/>
    <property type="evidence" value="ECO:0007669"/>
    <property type="project" value="InterPro"/>
</dbReference>
<dbReference type="GO" id="GO:0051205">
    <property type="term" value="P:protein insertion into membrane"/>
    <property type="evidence" value="ECO:0007669"/>
    <property type="project" value="TreeGrafter"/>
</dbReference>
<dbReference type="GO" id="GO:0015031">
    <property type="term" value="P:protein transport"/>
    <property type="evidence" value="ECO:0007669"/>
    <property type="project" value="UniProtKB-KW"/>
</dbReference>
<dbReference type="CDD" id="cd20070">
    <property type="entry name" value="5TM_YidC_Alb3"/>
    <property type="match status" value="1"/>
</dbReference>
<dbReference type="InterPro" id="IPR001708">
    <property type="entry name" value="YidC/ALB3/OXA1/COX18"/>
</dbReference>
<dbReference type="InterPro" id="IPR028055">
    <property type="entry name" value="YidC/Oxa/ALB_C"/>
</dbReference>
<dbReference type="InterPro" id="IPR047196">
    <property type="entry name" value="YidC_ALB_C"/>
</dbReference>
<dbReference type="NCBIfam" id="NF002570">
    <property type="entry name" value="PRK02201.1-5"/>
    <property type="match status" value="1"/>
</dbReference>
<dbReference type="NCBIfam" id="TIGR03592">
    <property type="entry name" value="yidC_oxa1_cterm"/>
    <property type="match status" value="1"/>
</dbReference>
<dbReference type="PANTHER" id="PTHR12428:SF65">
    <property type="entry name" value="CYTOCHROME C OXIDASE ASSEMBLY PROTEIN COX18, MITOCHONDRIAL"/>
    <property type="match status" value="1"/>
</dbReference>
<dbReference type="PANTHER" id="PTHR12428">
    <property type="entry name" value="OXA1"/>
    <property type="match status" value="1"/>
</dbReference>
<dbReference type="Pfam" id="PF02096">
    <property type="entry name" value="60KD_IMP"/>
    <property type="match status" value="1"/>
</dbReference>
<sequence length="388" mass="44537">MSYLNASKNKKAPKTKKEIFKVVIKWLKVFGFLFILVSMLWGCVQMYQAQYSVNQIVDMTGKSVYTPGVSFEIILSSLGEQGSKVHHFVYDKGSFFEYGYNAITSWKETFKLTQSPFYGFFVYPTAWILAGMIKLFSGTLNPLLDKSSQLTYGISSIFAIFLTTLLIKGITLSFGWKSQINQEKMQDIQLKVADIQAKYKDKKDMQSKQKQQLEIQALYKKENMSQFSALAGSFAPLPFLFAIYAIVRSTRALKIASVGPIALIEGPWQQITAGNYIYIIILAIYLPLQAVSMLLPTLLQMKKQKSITLTEAQKKSRKKQLIMQVVMMFVFIIIIVSVATGVCIYWIFSSILQIIQTYAFYLYNEKKRKAGNQERQRRLRQMERMNLK</sequence>